<gene>
    <name evidence="1" type="primary">rps10</name>
    <name type="ordered locus">STK_02680</name>
</gene>
<proteinExistence type="inferred from homology"/>
<feature type="chain" id="PRO_0000146661" description="Small ribosomal subunit protein uS10">
    <location>
        <begin position="1"/>
        <end position="102"/>
    </location>
</feature>
<accession>Q976B2</accession>
<name>RS10_SULTO</name>
<protein>
    <recommendedName>
        <fullName evidence="1">Small ribosomal subunit protein uS10</fullName>
    </recommendedName>
    <alternativeName>
        <fullName evidence="2">30S ribosomal protein S10</fullName>
    </alternativeName>
</protein>
<organism>
    <name type="scientific">Sulfurisphaera tokodaii (strain DSM 16993 / JCM 10545 / NBRC 100140 / 7)</name>
    <name type="common">Sulfolobus tokodaii</name>
    <dbReference type="NCBI Taxonomy" id="273063"/>
    <lineage>
        <taxon>Archaea</taxon>
        <taxon>Thermoproteota</taxon>
        <taxon>Thermoprotei</taxon>
        <taxon>Sulfolobales</taxon>
        <taxon>Sulfolobaceae</taxon>
        <taxon>Sulfurisphaera</taxon>
    </lineage>
</organism>
<reference key="1">
    <citation type="journal article" date="2001" name="DNA Res.">
        <title>Complete genome sequence of an aerobic thermoacidophilic Crenarchaeon, Sulfolobus tokodaii strain7.</title>
        <authorList>
            <person name="Kawarabayasi Y."/>
            <person name="Hino Y."/>
            <person name="Horikawa H."/>
            <person name="Jin-no K."/>
            <person name="Takahashi M."/>
            <person name="Sekine M."/>
            <person name="Baba S."/>
            <person name="Ankai A."/>
            <person name="Kosugi H."/>
            <person name="Hosoyama A."/>
            <person name="Fukui S."/>
            <person name="Nagai Y."/>
            <person name="Nishijima K."/>
            <person name="Otsuka R."/>
            <person name="Nakazawa H."/>
            <person name="Takamiya M."/>
            <person name="Kato Y."/>
            <person name="Yoshizawa T."/>
            <person name="Tanaka T."/>
            <person name="Kudoh Y."/>
            <person name="Yamazaki J."/>
            <person name="Kushida N."/>
            <person name="Oguchi A."/>
            <person name="Aoki K."/>
            <person name="Masuda S."/>
            <person name="Yanagii M."/>
            <person name="Nishimura M."/>
            <person name="Yamagishi A."/>
            <person name="Oshima T."/>
            <person name="Kikuchi H."/>
        </authorList>
    </citation>
    <scope>NUCLEOTIDE SEQUENCE [LARGE SCALE GENOMIC DNA]</scope>
    <source>
        <strain>DSM 16993 / JCM 10545 / NBRC 100140 / 7</strain>
    </source>
</reference>
<sequence>MPTKARIRLWSTNIENLNFVVNQIKTLAQKTGVEISGPIPLPTSRMEVPVMRLPHGEGKKKWEHWEMKIHKRIIDIASDERVMRQLMRVRVPDDVYIEIELI</sequence>
<evidence type="ECO:0000255" key="1">
    <source>
        <dbReference type="HAMAP-Rule" id="MF_00508"/>
    </source>
</evidence>
<evidence type="ECO:0000305" key="2"/>
<comment type="function">
    <text evidence="1">Involved in the binding of tRNA to the ribosomes.</text>
</comment>
<comment type="subunit">
    <text evidence="1">Part of the 30S ribosomal subunit.</text>
</comment>
<comment type="similarity">
    <text evidence="1">Belongs to the universal ribosomal protein uS10 family.</text>
</comment>
<keyword id="KW-1185">Reference proteome</keyword>
<keyword id="KW-0687">Ribonucleoprotein</keyword>
<keyword id="KW-0689">Ribosomal protein</keyword>
<dbReference type="EMBL" id="BA000023">
    <property type="protein sequence ID" value="BAB65235.1"/>
    <property type="molecule type" value="Genomic_DNA"/>
</dbReference>
<dbReference type="SMR" id="Q976B2"/>
<dbReference type="STRING" id="273063.STK_02680"/>
<dbReference type="KEGG" id="sto:STK_02680"/>
<dbReference type="PATRIC" id="fig|273063.9.peg.319"/>
<dbReference type="eggNOG" id="arCOG01758">
    <property type="taxonomic scope" value="Archaea"/>
</dbReference>
<dbReference type="OrthoDB" id="371736at2157"/>
<dbReference type="Proteomes" id="UP000001015">
    <property type="component" value="Chromosome"/>
</dbReference>
<dbReference type="GO" id="GO:0015935">
    <property type="term" value="C:small ribosomal subunit"/>
    <property type="evidence" value="ECO:0007669"/>
    <property type="project" value="InterPro"/>
</dbReference>
<dbReference type="GO" id="GO:0003735">
    <property type="term" value="F:structural constituent of ribosome"/>
    <property type="evidence" value="ECO:0007669"/>
    <property type="project" value="InterPro"/>
</dbReference>
<dbReference type="GO" id="GO:0000049">
    <property type="term" value="F:tRNA binding"/>
    <property type="evidence" value="ECO:0007669"/>
    <property type="project" value="UniProtKB-UniRule"/>
</dbReference>
<dbReference type="GO" id="GO:0006412">
    <property type="term" value="P:translation"/>
    <property type="evidence" value="ECO:0007669"/>
    <property type="project" value="UniProtKB-UniRule"/>
</dbReference>
<dbReference type="FunFam" id="3.30.70.600:FF:000004">
    <property type="entry name" value="30S ribosomal protein S10"/>
    <property type="match status" value="1"/>
</dbReference>
<dbReference type="Gene3D" id="3.30.70.600">
    <property type="entry name" value="Ribosomal protein S10 domain"/>
    <property type="match status" value="1"/>
</dbReference>
<dbReference type="HAMAP" id="MF_00508">
    <property type="entry name" value="Ribosomal_uS10"/>
    <property type="match status" value="1"/>
</dbReference>
<dbReference type="InterPro" id="IPR001848">
    <property type="entry name" value="Ribosomal_uS10"/>
</dbReference>
<dbReference type="InterPro" id="IPR018268">
    <property type="entry name" value="Ribosomal_uS10_CS"/>
</dbReference>
<dbReference type="InterPro" id="IPR027486">
    <property type="entry name" value="Ribosomal_uS10_dom"/>
</dbReference>
<dbReference type="InterPro" id="IPR036838">
    <property type="entry name" value="Ribosomal_uS10_dom_sf"/>
</dbReference>
<dbReference type="InterPro" id="IPR005729">
    <property type="entry name" value="Ribosomal_uS10_euk/arc"/>
</dbReference>
<dbReference type="NCBIfam" id="TIGR01046">
    <property type="entry name" value="uS10_euk_arch"/>
    <property type="match status" value="1"/>
</dbReference>
<dbReference type="PANTHER" id="PTHR11700">
    <property type="entry name" value="30S RIBOSOMAL PROTEIN S10 FAMILY MEMBER"/>
    <property type="match status" value="1"/>
</dbReference>
<dbReference type="Pfam" id="PF00338">
    <property type="entry name" value="Ribosomal_S10"/>
    <property type="match status" value="1"/>
</dbReference>
<dbReference type="PRINTS" id="PR00971">
    <property type="entry name" value="RIBOSOMALS10"/>
</dbReference>
<dbReference type="SMART" id="SM01403">
    <property type="entry name" value="Ribosomal_S10"/>
    <property type="match status" value="1"/>
</dbReference>
<dbReference type="SUPFAM" id="SSF54999">
    <property type="entry name" value="Ribosomal protein S10"/>
    <property type="match status" value="1"/>
</dbReference>
<dbReference type="PROSITE" id="PS00361">
    <property type="entry name" value="RIBOSOMAL_S10"/>
    <property type="match status" value="1"/>
</dbReference>